<evidence type="ECO:0000250" key="1"/>
<evidence type="ECO:0000250" key="2">
    <source>
        <dbReference type="UniProtKB" id="O00139"/>
    </source>
</evidence>
<evidence type="ECO:0000255" key="3"/>
<evidence type="ECO:0000255" key="4">
    <source>
        <dbReference type="PROSITE-ProRule" id="PRU00283"/>
    </source>
</evidence>
<evidence type="ECO:0000256" key="5">
    <source>
        <dbReference type="SAM" id="MobiDB-lite"/>
    </source>
</evidence>
<evidence type="ECO:0000269" key="6">
    <source>
    </source>
</evidence>
<evidence type="ECO:0000269" key="7">
    <source>
    </source>
</evidence>
<evidence type="ECO:0000269" key="8">
    <source>
    </source>
</evidence>
<evidence type="ECO:0000303" key="9">
    <source>
    </source>
</evidence>
<evidence type="ECO:0000303" key="10">
    <source>
    </source>
</evidence>
<evidence type="ECO:0000305" key="11"/>
<evidence type="ECO:0007744" key="12">
    <source>
    </source>
</evidence>
<evidence type="ECO:0007744" key="13">
    <source>
    </source>
</evidence>
<keyword id="KW-0007">Acetylation</keyword>
<keyword id="KW-0025">Alternative splicing</keyword>
<keyword id="KW-0067">ATP-binding</keyword>
<keyword id="KW-0131">Cell cycle</keyword>
<keyword id="KW-0132">Cell division</keyword>
<keyword id="KW-0175">Coiled coil</keyword>
<keyword id="KW-0963">Cytoplasm</keyword>
<keyword id="KW-0206">Cytoskeleton</keyword>
<keyword id="KW-0217">Developmental protein</keyword>
<keyword id="KW-0221">Differentiation</keyword>
<keyword id="KW-0458">Lysosome</keyword>
<keyword id="KW-0493">Microtubule</keyword>
<keyword id="KW-0498">Mitosis</keyword>
<keyword id="KW-0505">Motor protein</keyword>
<keyword id="KW-0524">Neurogenesis</keyword>
<keyword id="KW-0547">Nucleotide-binding</keyword>
<keyword id="KW-0597">Phosphoprotein</keyword>
<keyword id="KW-1185">Reference proteome</keyword>
<accession>P28740</accession>
<accession>O54744</accession>
<accession>Q91W03</accession>
<proteinExistence type="evidence at protein level"/>
<organism>
    <name type="scientific">Mus musculus</name>
    <name type="common">Mouse</name>
    <dbReference type="NCBI Taxonomy" id="10090"/>
    <lineage>
        <taxon>Eukaryota</taxon>
        <taxon>Metazoa</taxon>
        <taxon>Chordata</taxon>
        <taxon>Craniata</taxon>
        <taxon>Vertebrata</taxon>
        <taxon>Euteleostomi</taxon>
        <taxon>Mammalia</taxon>
        <taxon>Eutheria</taxon>
        <taxon>Euarchontoglires</taxon>
        <taxon>Glires</taxon>
        <taxon>Rodentia</taxon>
        <taxon>Myomorpha</taxon>
        <taxon>Muroidea</taxon>
        <taxon>Muridae</taxon>
        <taxon>Murinae</taxon>
        <taxon>Mus</taxon>
        <taxon>Mus</taxon>
    </lineage>
</organism>
<gene>
    <name type="primary">Kif2a</name>
    <name type="synonym">Kif2</name>
    <name type="synonym">Kns2</name>
</gene>
<feature type="chain" id="PRO_0000125415" description="Kinesin-like protein KIF2A">
    <location>
        <begin position="1"/>
        <end position="705"/>
    </location>
</feature>
<feature type="domain" description="Kinesin motor" evidence="4">
    <location>
        <begin position="222"/>
        <end position="552"/>
    </location>
</feature>
<feature type="region of interest" description="Globular" evidence="3">
    <location>
        <begin position="1"/>
        <end position="216"/>
    </location>
</feature>
<feature type="region of interest" description="Disordered" evidence="5">
    <location>
        <begin position="65"/>
        <end position="186"/>
    </location>
</feature>
<feature type="coiled-coil region" evidence="3">
    <location>
        <begin position="659"/>
        <end position="698"/>
    </location>
</feature>
<feature type="compositionally biased region" description="Polar residues" evidence="5">
    <location>
        <begin position="122"/>
        <end position="139"/>
    </location>
</feature>
<feature type="compositionally biased region" description="Basic and acidic residues" evidence="5">
    <location>
        <begin position="158"/>
        <end position="186"/>
    </location>
</feature>
<feature type="binding site" evidence="4">
    <location>
        <begin position="312"/>
        <end position="319"/>
    </location>
    <ligand>
        <name>ATP</name>
        <dbReference type="ChEBI" id="CHEBI:30616"/>
    </ligand>
</feature>
<feature type="modified residue" description="Phosphoserine" evidence="2">
    <location>
        <position position="75"/>
    </location>
</feature>
<feature type="modified residue" description="Phosphothreonine" evidence="2">
    <location>
        <position position="96"/>
    </location>
</feature>
<feature type="modified residue" description="N6-acetyllysine" evidence="13">
    <location>
        <position position="101"/>
    </location>
</feature>
<feature type="modified residue" description="Phosphoserine" evidence="2">
    <location>
        <position position="134"/>
    </location>
</feature>
<feature type="modified residue" description="Phosphoserine" evidence="12">
    <location>
        <position position="139"/>
    </location>
</feature>
<feature type="splice variant" id="VSP_028377" description="In isoform 1 and isoform 2." evidence="9 10">
    <location>
        <begin position="1"/>
        <end position="27"/>
    </location>
</feature>
<feature type="splice variant" id="VSP_028378" description="In isoform 2." evidence="10">
    <original>GSVSDISPVQAAKKEFGPPS</original>
    <variation>A</variation>
    <location>
        <begin position="133"/>
        <end position="152"/>
    </location>
</feature>
<feature type="splice variant" id="VSP_028379" description="In isoform 1." evidence="9 10">
    <original>E</original>
    <variation>EFGISPSDIPFSQGGGSRPDLSPSYDYDDFSPSITRVKE</variation>
    <location>
        <position position="551"/>
    </location>
</feature>
<feature type="sequence conflict" description="In Ref. 2; CAA75815." evidence="11" ref="2">
    <original>A</original>
    <variation>ARA</variation>
    <location>
        <position position="99"/>
    </location>
</feature>
<feature type="sequence conflict" description="In Ref. 2; CAA75815." evidence="11" ref="2">
    <location>
        <begin position="117"/>
        <end position="118"/>
    </location>
</feature>
<feature type="sequence conflict" description="In Ref. 1; BAA02165." evidence="11" ref="1">
    <original>A</original>
    <variation>R</variation>
    <location>
        <position position="486"/>
    </location>
</feature>
<feature type="modified residue" description="Phosphoserine" evidence="12">
    <location sequence="P28740-1">
        <position position="528"/>
    </location>
</feature>
<feature type="modified residue" description="Phosphoserine" evidence="12">
    <location sequence="P28740-1">
        <position position="545"/>
    </location>
</feature>
<comment type="function">
    <text evidence="2 6 8">Plus end-directed microtubule-dependent motor required for normal brain development. May regulate microtubule dynamics during axonal growth. Required for normal progression through mitosis. Required for normal congress of chromosomes at the metaphase plate. Required for normal spindle dynamics during mitosis. Promotes spindle turnover. Implicated in formation of bipolar mitotic spindles. Has microtubule depolymerization activity (By similarity).</text>
</comment>
<comment type="subunit">
    <text evidence="2">Interacts with AURKA and PLK1. Interacts with PSRC1. Interacts with MCRS1; the interaction enhances recruitment of KIF2A to the minus ends of spindle microtubules which promotes chromosome alignment.</text>
</comment>
<comment type="subcellular location">
    <subcellularLocation>
        <location evidence="1">Cytoplasm</location>
    </subcellularLocation>
    <subcellularLocation>
        <location evidence="8">Cytoplasm</location>
        <location evidence="8">Cytoskeleton</location>
    </subcellularLocation>
    <subcellularLocation>
        <location evidence="8">Cytoplasm</location>
        <location evidence="8">Cytoskeleton</location>
        <location evidence="8">Microtubule organizing center</location>
        <location evidence="8">Centrosome</location>
    </subcellularLocation>
    <subcellularLocation>
        <location evidence="8">Cytoplasm</location>
        <location evidence="8">Cytoskeleton</location>
        <location evidence="8">Spindle pole</location>
    </subcellularLocation>
    <subcellularLocation>
        <location evidence="1">Cytoplasm</location>
        <location evidence="1">Cytoskeleton</location>
        <location evidence="1">Spindle</location>
    </subcellularLocation>
    <subcellularLocation>
        <location evidence="8">Lysosome</location>
    </subcellularLocation>
    <text evidence="1">Localized to the spindle microtubules and spindle poles from prophase to metaphase. Efficient targeting to spindle microtubules and spindle poles requires the kinase activity of PLK1. Recruited to mitotic spindles by interaction with PSRC1 (By similarity). Associated with lysosomes in NIH3T3 cells.</text>
</comment>
<comment type="alternative products">
    <event type="alternative splicing"/>
    <isoform>
        <id>P28740-3</id>
        <name>3</name>
        <sequence type="displayed"/>
    </isoform>
    <isoform>
        <id>P28740-1</id>
        <name>1</name>
        <name>Kif2</name>
        <sequence type="described" ref="VSP_028377 VSP_028379"/>
    </isoform>
    <isoform>
        <id>P28740-2</id>
        <name>2</name>
        <name>Kif2-beta</name>
        <sequence type="described" ref="VSP_028377 VSP_028378"/>
    </isoform>
</comment>
<comment type="tissue specificity">
    <text evidence="7 8">Highest level in lung. High level in ovary, moderate levels in heart, kidney, placenta, skeletal muscle and spleen (at protein level). Pancreas and spleen express a shorter isoform (at protein level). Expressed in the flagellum of elongated spermatids and sperm in the testis lumen (at protein level) (PubMed:24339785). Isoform 1 expressed in neuronal cells. Isoform 2 expressed in astrocytes and fibroblasts.</text>
</comment>
<comment type="developmental stage">
    <text evidence="8">Isoform 1 expressed at low level in 13 dpc embryonic hippocampus, higher level by stage 15 persisting into juvenile and adult stages. Isoform 2 expressed in 13 dpc and 15 dpc embryonic hippocampus declining to very low levels in juvenile and adult neurons. High level of isoform 1 and very low level of isoform 2 in stage 2 and 5 hippocampal neurons in culture.</text>
</comment>
<comment type="disruption phenotype">
    <text evidence="6">Mice show overextension of collateral branches of developing axons and defects in neuronal migration in the brain. They die within 24 hours of birth.</text>
</comment>
<comment type="similarity">
    <text evidence="4">Belongs to the TRAFAC class myosin-kinesin ATPase superfamily. Kinesin family. MCAK/KIF2 subfamily.</text>
</comment>
<name>KIF2A_MOUSE</name>
<protein>
    <recommendedName>
        <fullName>Kinesin-like protein KIF2A</fullName>
    </recommendedName>
    <alternativeName>
        <fullName>Kinesin-2</fullName>
    </alternativeName>
</protein>
<reference key="1">
    <citation type="journal article" date="1992" name="J. Cell Biol.">
        <title>Kinesin family in murine central nervous system.</title>
        <authorList>
            <person name="Aizawa H."/>
            <person name="Sekine Y."/>
            <person name="Takemura R."/>
            <person name="Zhang Z."/>
            <person name="Nangaku M."/>
            <person name="Hirokawa N."/>
        </authorList>
    </citation>
    <scope>NUCLEOTIDE SEQUENCE [MRNA] (ISOFORM 1)</scope>
    <source>
        <tissue>Brain</tissue>
    </source>
</reference>
<reference key="2">
    <citation type="journal article" date="1998" name="EMBO J.">
        <title>KIF2beta, a new kinesin superfamily protein in non-neuronal cells, is associated with lysosomes and may be implicated in their centrifugal translocation.</title>
        <authorList>
            <person name="Santama N."/>
            <person name="Krijnse-Locker J."/>
            <person name="Griffiths G."/>
            <person name="Noda Y."/>
            <person name="Hirokawa N."/>
            <person name="Dotti C.G."/>
        </authorList>
    </citation>
    <scope>NUCLEOTIDE SEQUENCE [MRNA] (ISOFORMS 1 AND 2)</scope>
    <scope>FUNCTION</scope>
    <scope>SUBCELLULAR LOCATION</scope>
    <scope>TISSUE SPECIFICITY</scope>
    <scope>DEVELOPMENTAL STAGE</scope>
    <source>
        <strain>C57BL/6 X SJL</strain>
        <tissue>Hippocampus</tissue>
    </source>
</reference>
<reference key="3">
    <citation type="journal article" date="2004" name="Genome Res.">
        <title>The status, quality, and expansion of the NIH full-length cDNA project: the Mammalian Gene Collection (MGC).</title>
        <authorList>
            <consortium name="The MGC Project Team"/>
        </authorList>
    </citation>
    <scope>NUCLEOTIDE SEQUENCE [LARGE SCALE MRNA] (ISOFORM 3)</scope>
    <source>
        <strain>FVB/N-3</strain>
        <tissue>Mammary gland</tissue>
    </source>
</reference>
<reference key="4">
    <citation type="journal article" date="2003" name="Cell">
        <title>Kinesin superfamily protein 2A (KIF2A) functions in suppression of collateral branch extension.</title>
        <authorList>
            <person name="Homma N."/>
            <person name="Takei Y."/>
            <person name="Tanaka Y."/>
            <person name="Nakata T."/>
            <person name="Terada S."/>
            <person name="Kikkawa M."/>
            <person name="Noda Y."/>
            <person name="Hirokawa N."/>
        </authorList>
    </citation>
    <scope>FUNCTION</scope>
    <scope>DISRUPTION PHENOTYPE</scope>
</reference>
<reference key="5">
    <citation type="journal article" date="2004" name="Mol. Cell. Proteomics">
        <title>Phosphoproteomic analysis of the developing mouse brain.</title>
        <authorList>
            <person name="Ballif B.A."/>
            <person name="Villen J."/>
            <person name="Beausoleil S.A."/>
            <person name="Schwartz D."/>
            <person name="Gygi S.P."/>
        </authorList>
    </citation>
    <scope>IDENTIFICATION BY MASS SPECTROMETRY [LARGE SCALE ANALYSIS]</scope>
    <source>
        <tissue>Embryonic brain</tissue>
    </source>
</reference>
<reference key="6">
    <citation type="journal article" date="2010" name="Cell">
        <title>A tissue-specific atlas of mouse protein phosphorylation and expression.</title>
        <authorList>
            <person name="Huttlin E.L."/>
            <person name="Jedrychowski M.P."/>
            <person name="Elias J.E."/>
            <person name="Goswami T."/>
            <person name="Rad R."/>
            <person name="Beausoleil S.A."/>
            <person name="Villen J."/>
            <person name="Haas W."/>
            <person name="Sowa M.E."/>
            <person name="Gygi S.P."/>
        </authorList>
    </citation>
    <scope>PHOSPHORYLATION [LARGE SCALE ANALYSIS] AT SER-139</scope>
    <scope>PHOSPHORYLATION [LARGE SCALE ANALYSIS] AT SER-528 AND SER-545 (ISOFORM 1)</scope>
    <scope>IDENTIFICATION BY MASS SPECTROMETRY [LARGE SCALE ANALYSIS]</scope>
    <source>
        <tissue>Brain</tissue>
        <tissue>Spleen</tissue>
        <tissue>Testis</tissue>
    </source>
</reference>
<reference key="7">
    <citation type="journal article" date="2013" name="Mol. Cell">
        <title>SIRT5-mediated lysine desuccinylation impacts diverse metabolic pathways.</title>
        <authorList>
            <person name="Park J."/>
            <person name="Chen Y."/>
            <person name="Tishkoff D.X."/>
            <person name="Peng C."/>
            <person name="Tan M."/>
            <person name="Dai L."/>
            <person name="Xie Z."/>
            <person name="Zhang Y."/>
            <person name="Zwaans B.M."/>
            <person name="Skinner M.E."/>
            <person name="Lombard D.B."/>
            <person name="Zhao Y."/>
        </authorList>
    </citation>
    <scope>ACETYLATION [LARGE SCALE ANALYSIS] AT LYS-101</scope>
    <scope>IDENTIFICATION BY MASS SPECTROMETRY [LARGE SCALE ANALYSIS]</scope>
    <source>
        <tissue>Embryonic fibroblast</tissue>
    </source>
</reference>
<reference key="8">
    <citation type="journal article" date="2013" name="PLoS Genet.">
        <title>CRIS-a novel cAMP-binding protein controlling spermiogenesis and the development of flagellar bending.</title>
        <authorList>
            <person name="Kraehling A.M."/>
            <person name="Alvarez L."/>
            <person name="Debowski K."/>
            <person name="Van Q."/>
            <person name="Gunkel M."/>
            <person name="Irsen S."/>
            <person name="Al-Amoudi A."/>
            <person name="Struenker T."/>
            <person name="Kremmer E."/>
            <person name="Krause E."/>
            <person name="Voigt I."/>
            <person name="Woertge S."/>
            <person name="Waisman A."/>
            <person name="Weyand I."/>
            <person name="Seifert R."/>
            <person name="Kaupp U.B."/>
            <person name="Wachten D."/>
        </authorList>
    </citation>
    <scope>TISSUE SPECIFICITY</scope>
</reference>
<sequence>MATANFGKIQIGIYVEIKRSDGRIHQAMVTSLNEDNESVTVEWIENGDTKGKEIDLESIFSLNPDLVPDEDIEPSPELPPPSSSSKVNKIVKNRRTVAAVKNDPPPRDNRVVGSARARPSQLPEQSSSAQQNGSVSDISPVQAAKKEFGPPSRRKSNCVKEVEKLQEKREKRRLQQQELREKRAQDVDATNPNYEIMCMIRDFRGSLDYRPLTTADPIDEHRICVCVRKRPLNKKETQMKDLDVITIPSKDVVMVHEPKQKVDLTRYLENQTFRFDYAFDDSAPNEMVYRFTARPLVETIFERGMATCFAYGQTGSGKTHTMGGDFSGKNQDCSKGIYALAARDVFLMLKKPNYKKLELQVYATFFEIYSGKVFDLLNRKTKLRVLEDGKQQVQVVGLQEREVKCVEDVLKLIDIGNSCRTSGQTSANAHSSRSHAVFQIILRRKGKLHGKFSLIDLAGNERGADTSSADRQTRLEGAEINKSLLALKECIRALGRNKPHTPFRASKLTQVLRDSFIGENSRTCMIATISPGMASCENTLNTLRYANRVKELTVNPAAAGDVHPIMHHPPSQIDDLETQWGVGSSPQRDDLKLLCEQNEEEVSPQLFTFHEAVSQMVEMEEQVVEDHRAVFQESIRWIEDEKALLEMTEEVDYDVDSYATQLEAILEQKIDILTELRDKVKSFRAALQEEEQASKQINPKRPRAL</sequence>
<dbReference type="EMBL" id="D12644">
    <property type="protein sequence ID" value="BAA02165.1"/>
    <property type="molecule type" value="mRNA"/>
</dbReference>
<dbReference type="EMBL" id="Y15894">
    <property type="protein sequence ID" value="CAA75815.1"/>
    <property type="molecule type" value="mRNA"/>
</dbReference>
<dbReference type="EMBL" id="BC006803">
    <property type="protein sequence ID" value="AAH06803.2"/>
    <property type="molecule type" value="mRNA"/>
</dbReference>
<dbReference type="CCDS" id="CCDS26759.1">
    <molecule id="P28740-1"/>
</dbReference>
<dbReference type="CCDS" id="CCDS49356.1">
    <molecule id="P28740-3"/>
</dbReference>
<dbReference type="PIR" id="A44259">
    <property type="entry name" value="A44259"/>
</dbReference>
<dbReference type="RefSeq" id="NP_001139251.1">
    <molecule id="P28740-3"/>
    <property type="nucleotide sequence ID" value="NM_001145779.1"/>
</dbReference>
<dbReference type="RefSeq" id="NP_001365865.1">
    <molecule id="P28740-2"/>
    <property type="nucleotide sequence ID" value="NM_001378936.1"/>
</dbReference>
<dbReference type="RefSeq" id="NP_032468.2">
    <molecule id="P28740-1"/>
    <property type="nucleotide sequence ID" value="NM_008442.2"/>
</dbReference>
<dbReference type="RefSeq" id="XP_006517602.1">
    <property type="nucleotide sequence ID" value="XM_006517539.3"/>
</dbReference>
<dbReference type="SMR" id="P28740"/>
<dbReference type="BioGRID" id="200938">
    <property type="interactions" value="23"/>
</dbReference>
<dbReference type="FunCoup" id="P28740">
    <property type="interactions" value="3203"/>
</dbReference>
<dbReference type="IntAct" id="P28740">
    <property type="interactions" value="13"/>
</dbReference>
<dbReference type="MINT" id="P28740"/>
<dbReference type="STRING" id="10090.ENSMUSP00000112715"/>
<dbReference type="GlyGen" id="P28740">
    <property type="glycosylation" value="2 sites, 1 N-linked glycan (1 site), 1 O-linked glycan (1 site)"/>
</dbReference>
<dbReference type="iPTMnet" id="P28740"/>
<dbReference type="PhosphoSitePlus" id="P28740"/>
<dbReference type="SwissPalm" id="P28740"/>
<dbReference type="jPOST" id="P28740"/>
<dbReference type="PaxDb" id="10090-ENSMUSP00000112715"/>
<dbReference type="PeptideAtlas" id="P28740"/>
<dbReference type="ProteomicsDB" id="263534">
    <molecule id="P28740-3"/>
</dbReference>
<dbReference type="ProteomicsDB" id="263535">
    <molecule id="P28740-1"/>
</dbReference>
<dbReference type="ProteomicsDB" id="263536">
    <molecule id="P28740-2"/>
</dbReference>
<dbReference type="Pumba" id="P28740"/>
<dbReference type="Antibodypedia" id="1353">
    <property type="antibodies" value="215 antibodies from 30 providers"/>
</dbReference>
<dbReference type="DNASU" id="16563"/>
<dbReference type="Ensembl" id="ENSMUST00000022204.16">
    <molecule id="P28740-3"/>
    <property type="protein sequence ID" value="ENSMUSP00000022204.10"/>
    <property type="gene ID" value="ENSMUSG00000021693.21"/>
</dbReference>
<dbReference type="Ensembl" id="ENSMUST00000117423.9">
    <molecule id="P28740-2"/>
    <property type="protein sequence ID" value="ENSMUSP00000113921.3"/>
    <property type="gene ID" value="ENSMUSG00000021693.21"/>
</dbReference>
<dbReference type="Ensembl" id="ENSMUST00000122233.8">
    <molecule id="P28740-1"/>
    <property type="protein sequence ID" value="ENSMUSP00000112715.2"/>
    <property type="gene ID" value="ENSMUSG00000021693.21"/>
</dbReference>
<dbReference type="GeneID" id="16563"/>
<dbReference type="KEGG" id="mmu:16563"/>
<dbReference type="UCSC" id="uc007rub.2">
    <molecule id="P28740-3"/>
    <property type="organism name" value="mouse"/>
</dbReference>
<dbReference type="UCSC" id="uc007ruc.2">
    <molecule id="P28740-1"/>
    <property type="organism name" value="mouse"/>
</dbReference>
<dbReference type="AGR" id="MGI:108390"/>
<dbReference type="CTD" id="3796"/>
<dbReference type="MGI" id="MGI:108390">
    <property type="gene designation" value="Kif2a"/>
</dbReference>
<dbReference type="VEuPathDB" id="HostDB:ENSMUSG00000021693"/>
<dbReference type="eggNOG" id="KOG0246">
    <property type="taxonomic scope" value="Eukaryota"/>
</dbReference>
<dbReference type="GeneTree" id="ENSGT00940000155570"/>
<dbReference type="HOGENOM" id="CLU_001485_19_1_1"/>
<dbReference type="InParanoid" id="P28740"/>
<dbReference type="OMA" id="NWDTARM"/>
<dbReference type="PhylomeDB" id="P28740"/>
<dbReference type="TreeFam" id="TF105222"/>
<dbReference type="Reactome" id="R-MMU-141444">
    <property type="pathway name" value="Amplification of signal from unattached kinetochores via a MAD2 inhibitory signal"/>
</dbReference>
<dbReference type="Reactome" id="R-MMU-2132295">
    <property type="pathway name" value="MHC class II antigen presentation"/>
</dbReference>
<dbReference type="Reactome" id="R-MMU-2467813">
    <property type="pathway name" value="Separation of Sister Chromatids"/>
</dbReference>
<dbReference type="Reactome" id="R-MMU-2500257">
    <property type="pathway name" value="Resolution of Sister Chromatid Cohesion"/>
</dbReference>
<dbReference type="Reactome" id="R-MMU-5663220">
    <property type="pathway name" value="RHO GTPases Activate Formins"/>
</dbReference>
<dbReference type="Reactome" id="R-MMU-6811434">
    <property type="pathway name" value="COPI-dependent Golgi-to-ER retrograde traffic"/>
</dbReference>
<dbReference type="Reactome" id="R-MMU-68877">
    <property type="pathway name" value="Mitotic Prometaphase"/>
</dbReference>
<dbReference type="Reactome" id="R-MMU-9648025">
    <property type="pathway name" value="EML4 and NUDC in mitotic spindle formation"/>
</dbReference>
<dbReference type="Reactome" id="R-MMU-983189">
    <property type="pathway name" value="Kinesins"/>
</dbReference>
<dbReference type="BioGRID-ORCS" id="16563">
    <property type="hits" value="1 hit in 75 CRISPR screens"/>
</dbReference>
<dbReference type="CD-CODE" id="CE726F99">
    <property type="entry name" value="Postsynaptic density"/>
</dbReference>
<dbReference type="ChiTaRS" id="Kif2a">
    <property type="organism name" value="mouse"/>
</dbReference>
<dbReference type="PRO" id="PR:P28740"/>
<dbReference type="Proteomes" id="UP000000589">
    <property type="component" value="Chromosome 13"/>
</dbReference>
<dbReference type="RNAct" id="P28740">
    <property type="molecule type" value="protein"/>
</dbReference>
<dbReference type="Bgee" id="ENSMUSG00000021693">
    <property type="expression patterns" value="Expressed in barrel cortex and 266 other cell types or tissues"/>
</dbReference>
<dbReference type="ExpressionAtlas" id="P28740">
    <property type="expression patterns" value="baseline and differential"/>
</dbReference>
<dbReference type="GO" id="GO:0005813">
    <property type="term" value="C:centrosome"/>
    <property type="evidence" value="ECO:0007669"/>
    <property type="project" value="UniProtKB-SubCell"/>
</dbReference>
<dbReference type="GO" id="GO:0030425">
    <property type="term" value="C:dendrite"/>
    <property type="evidence" value="ECO:0007669"/>
    <property type="project" value="GOC"/>
</dbReference>
<dbReference type="GO" id="GO:0098982">
    <property type="term" value="C:GABA-ergic synapse"/>
    <property type="evidence" value="ECO:0000314"/>
    <property type="project" value="SynGO"/>
</dbReference>
<dbReference type="GO" id="GO:0005764">
    <property type="term" value="C:lysosome"/>
    <property type="evidence" value="ECO:0007669"/>
    <property type="project" value="UniProtKB-SubCell"/>
</dbReference>
<dbReference type="GO" id="GO:0005874">
    <property type="term" value="C:microtubule"/>
    <property type="evidence" value="ECO:0007669"/>
    <property type="project" value="UniProtKB-KW"/>
</dbReference>
<dbReference type="GO" id="GO:0097228">
    <property type="term" value="C:sperm principal piece"/>
    <property type="evidence" value="ECO:0000314"/>
    <property type="project" value="MGI"/>
</dbReference>
<dbReference type="GO" id="GO:0000922">
    <property type="term" value="C:spindle pole"/>
    <property type="evidence" value="ECO:0007669"/>
    <property type="project" value="UniProtKB-SubCell"/>
</dbReference>
<dbReference type="GO" id="GO:0005524">
    <property type="term" value="F:ATP binding"/>
    <property type="evidence" value="ECO:0007669"/>
    <property type="project" value="UniProtKB-KW"/>
</dbReference>
<dbReference type="GO" id="GO:0008017">
    <property type="term" value="F:microtubule binding"/>
    <property type="evidence" value="ECO:0007669"/>
    <property type="project" value="InterPro"/>
</dbReference>
<dbReference type="GO" id="GO:0003777">
    <property type="term" value="F:microtubule motor activity"/>
    <property type="evidence" value="ECO:0007669"/>
    <property type="project" value="InterPro"/>
</dbReference>
<dbReference type="GO" id="GO:0030154">
    <property type="term" value="P:cell differentiation"/>
    <property type="evidence" value="ECO:0007669"/>
    <property type="project" value="UniProtKB-KW"/>
</dbReference>
<dbReference type="GO" id="GO:0051301">
    <property type="term" value="P:cell division"/>
    <property type="evidence" value="ECO:0007669"/>
    <property type="project" value="UniProtKB-KW"/>
</dbReference>
<dbReference type="GO" id="GO:0098935">
    <property type="term" value="P:dendritic transport"/>
    <property type="evidence" value="ECO:0000314"/>
    <property type="project" value="SynGO"/>
</dbReference>
<dbReference type="GO" id="GO:0090307">
    <property type="term" value="P:mitotic spindle assembly"/>
    <property type="evidence" value="ECO:0000250"/>
    <property type="project" value="UniProtKB"/>
</dbReference>
<dbReference type="GO" id="GO:0007052">
    <property type="term" value="P:mitotic spindle organization"/>
    <property type="evidence" value="ECO:0000250"/>
    <property type="project" value="UniProtKB"/>
</dbReference>
<dbReference type="GO" id="GO:0007399">
    <property type="term" value="P:nervous system development"/>
    <property type="evidence" value="ECO:0007669"/>
    <property type="project" value="UniProtKB-KW"/>
</dbReference>
<dbReference type="CDD" id="cd01367">
    <property type="entry name" value="KISc_KIF2_like"/>
    <property type="match status" value="1"/>
</dbReference>
<dbReference type="FunFam" id="3.40.850.10:FF:000006">
    <property type="entry name" value="Kinesin-like protein"/>
    <property type="match status" value="1"/>
</dbReference>
<dbReference type="Gene3D" id="3.40.850.10">
    <property type="entry name" value="Kinesin motor domain"/>
    <property type="match status" value="1"/>
</dbReference>
<dbReference type="InterPro" id="IPR054473">
    <property type="entry name" value="KIF2A-like_N"/>
</dbReference>
<dbReference type="InterPro" id="IPR027640">
    <property type="entry name" value="Kinesin-like_fam"/>
</dbReference>
<dbReference type="InterPro" id="IPR019821">
    <property type="entry name" value="Kinesin_motor_CS"/>
</dbReference>
<dbReference type="InterPro" id="IPR001752">
    <property type="entry name" value="Kinesin_motor_dom"/>
</dbReference>
<dbReference type="InterPro" id="IPR036961">
    <property type="entry name" value="Kinesin_motor_dom_sf"/>
</dbReference>
<dbReference type="InterPro" id="IPR027417">
    <property type="entry name" value="P-loop_NTPase"/>
</dbReference>
<dbReference type="PANTHER" id="PTHR47971:SF24">
    <property type="entry name" value="KINESIN-LIKE PROTEIN"/>
    <property type="match status" value="1"/>
</dbReference>
<dbReference type="PANTHER" id="PTHR47971">
    <property type="entry name" value="KINESIN-RELATED PROTEIN 6"/>
    <property type="match status" value="1"/>
</dbReference>
<dbReference type="Pfam" id="PF22923">
    <property type="entry name" value="KIF2A-like_1st"/>
    <property type="match status" value="1"/>
</dbReference>
<dbReference type="Pfam" id="PF00225">
    <property type="entry name" value="Kinesin"/>
    <property type="match status" value="1"/>
</dbReference>
<dbReference type="PRINTS" id="PR00380">
    <property type="entry name" value="KINESINHEAVY"/>
</dbReference>
<dbReference type="SMART" id="SM00129">
    <property type="entry name" value="KISc"/>
    <property type="match status" value="1"/>
</dbReference>
<dbReference type="SUPFAM" id="SSF52540">
    <property type="entry name" value="P-loop containing nucleoside triphosphate hydrolases"/>
    <property type="match status" value="1"/>
</dbReference>
<dbReference type="PROSITE" id="PS00411">
    <property type="entry name" value="KINESIN_MOTOR_1"/>
    <property type="match status" value="1"/>
</dbReference>
<dbReference type="PROSITE" id="PS50067">
    <property type="entry name" value="KINESIN_MOTOR_2"/>
    <property type="match status" value="1"/>
</dbReference>